<proteinExistence type="inferred from homology"/>
<keyword id="KW-0963">Cytoplasm</keyword>
<keyword id="KW-0489">Methyltransferase</keyword>
<keyword id="KW-1185">Reference proteome</keyword>
<keyword id="KW-0698">rRNA processing</keyword>
<keyword id="KW-0949">S-adenosyl-L-methionine</keyword>
<keyword id="KW-0808">Transferase</keyword>
<comment type="function">
    <text evidence="1">Specifically methylates the pseudouridine at position 1915 (m3Psi1915) in 23S rRNA.</text>
</comment>
<comment type="catalytic activity">
    <reaction evidence="1">
        <text>pseudouridine(1915) in 23S rRNA + S-adenosyl-L-methionine = N(3)-methylpseudouridine(1915) in 23S rRNA + S-adenosyl-L-homocysteine + H(+)</text>
        <dbReference type="Rhea" id="RHEA:42752"/>
        <dbReference type="Rhea" id="RHEA-COMP:10221"/>
        <dbReference type="Rhea" id="RHEA-COMP:10222"/>
        <dbReference type="ChEBI" id="CHEBI:15378"/>
        <dbReference type="ChEBI" id="CHEBI:57856"/>
        <dbReference type="ChEBI" id="CHEBI:59789"/>
        <dbReference type="ChEBI" id="CHEBI:65314"/>
        <dbReference type="ChEBI" id="CHEBI:74486"/>
        <dbReference type="EC" id="2.1.1.177"/>
    </reaction>
</comment>
<comment type="subunit">
    <text evidence="1">Homodimer.</text>
</comment>
<comment type="subcellular location">
    <subcellularLocation>
        <location evidence="1">Cytoplasm</location>
    </subcellularLocation>
</comment>
<comment type="similarity">
    <text evidence="1">Belongs to the RNA methyltransferase RlmH family.</text>
</comment>
<accession>A5G903</accession>
<sequence>MKMRVLWVGKTQEEWVRRGIDEYAGRIRRYTPLELAEAKEEKGAAAEAMREREGERLVKLLPRNARLILLDERGEQLSSPDLAGFIAANRDGGVQELAFAIGGAYGFSDSFRSMAYKTIALSRMTFTHQMVRIFLLEQIYRGFTIINGEPYHH</sequence>
<reference key="1">
    <citation type="submission" date="2007-05" db="EMBL/GenBank/DDBJ databases">
        <title>Complete sequence of Geobacter uraniireducens Rf4.</title>
        <authorList>
            <consortium name="US DOE Joint Genome Institute"/>
            <person name="Copeland A."/>
            <person name="Lucas S."/>
            <person name="Lapidus A."/>
            <person name="Barry K."/>
            <person name="Detter J.C."/>
            <person name="Glavina del Rio T."/>
            <person name="Hammon N."/>
            <person name="Israni S."/>
            <person name="Dalin E."/>
            <person name="Tice H."/>
            <person name="Pitluck S."/>
            <person name="Chertkov O."/>
            <person name="Brettin T."/>
            <person name="Bruce D."/>
            <person name="Han C."/>
            <person name="Schmutz J."/>
            <person name="Larimer F."/>
            <person name="Land M."/>
            <person name="Hauser L."/>
            <person name="Kyrpides N."/>
            <person name="Mikhailova N."/>
            <person name="Shelobolina E."/>
            <person name="Aklujkar M."/>
            <person name="Lovley D."/>
            <person name="Richardson P."/>
        </authorList>
    </citation>
    <scope>NUCLEOTIDE SEQUENCE [LARGE SCALE GENOMIC DNA]</scope>
    <source>
        <strain>ATCC BAA-1134 / JCM 13001 / Rf4</strain>
    </source>
</reference>
<organism>
    <name type="scientific">Geotalea uraniireducens (strain Rf4)</name>
    <name type="common">Geobacter uraniireducens</name>
    <dbReference type="NCBI Taxonomy" id="351605"/>
    <lineage>
        <taxon>Bacteria</taxon>
        <taxon>Pseudomonadati</taxon>
        <taxon>Thermodesulfobacteriota</taxon>
        <taxon>Desulfuromonadia</taxon>
        <taxon>Geobacterales</taxon>
        <taxon>Geobacteraceae</taxon>
        <taxon>Geotalea</taxon>
    </lineage>
</organism>
<feature type="chain" id="PRO_1000082807" description="Ribosomal RNA large subunit methyltransferase H">
    <location>
        <begin position="1"/>
        <end position="153"/>
    </location>
</feature>
<feature type="binding site" evidence="1">
    <location>
        <position position="70"/>
    </location>
    <ligand>
        <name>S-adenosyl-L-methionine</name>
        <dbReference type="ChEBI" id="CHEBI:59789"/>
    </ligand>
</feature>
<feature type="binding site" evidence="1">
    <location>
        <position position="102"/>
    </location>
    <ligand>
        <name>S-adenosyl-L-methionine</name>
        <dbReference type="ChEBI" id="CHEBI:59789"/>
    </ligand>
</feature>
<feature type="binding site" evidence="1">
    <location>
        <begin position="121"/>
        <end position="126"/>
    </location>
    <ligand>
        <name>S-adenosyl-L-methionine</name>
        <dbReference type="ChEBI" id="CHEBI:59789"/>
    </ligand>
</feature>
<gene>
    <name evidence="1" type="primary">rlmH</name>
    <name type="ordered locus">Gura_4128</name>
</gene>
<evidence type="ECO:0000255" key="1">
    <source>
        <dbReference type="HAMAP-Rule" id="MF_00658"/>
    </source>
</evidence>
<name>RLMH_GEOUR</name>
<dbReference type="EC" id="2.1.1.177" evidence="1"/>
<dbReference type="EMBL" id="CP000698">
    <property type="protein sequence ID" value="ABQ28271.1"/>
    <property type="molecule type" value="Genomic_DNA"/>
</dbReference>
<dbReference type="RefSeq" id="WP_011940906.1">
    <property type="nucleotide sequence ID" value="NC_009483.1"/>
</dbReference>
<dbReference type="SMR" id="A5G903"/>
<dbReference type="STRING" id="351605.Gura_4128"/>
<dbReference type="KEGG" id="gur:Gura_4128"/>
<dbReference type="HOGENOM" id="CLU_100552_2_0_7"/>
<dbReference type="OrthoDB" id="9806643at2"/>
<dbReference type="Proteomes" id="UP000006695">
    <property type="component" value="Chromosome"/>
</dbReference>
<dbReference type="GO" id="GO:0005737">
    <property type="term" value="C:cytoplasm"/>
    <property type="evidence" value="ECO:0007669"/>
    <property type="project" value="UniProtKB-SubCell"/>
</dbReference>
<dbReference type="GO" id="GO:0070038">
    <property type="term" value="F:rRNA (pseudouridine-N3-)-methyltransferase activity"/>
    <property type="evidence" value="ECO:0007669"/>
    <property type="project" value="UniProtKB-UniRule"/>
</dbReference>
<dbReference type="CDD" id="cd18081">
    <property type="entry name" value="RlmH-like"/>
    <property type="match status" value="1"/>
</dbReference>
<dbReference type="Gene3D" id="3.40.1280.10">
    <property type="match status" value="1"/>
</dbReference>
<dbReference type="HAMAP" id="MF_00658">
    <property type="entry name" value="23SrRNA_methyltr_H"/>
    <property type="match status" value="1"/>
</dbReference>
<dbReference type="InterPro" id="IPR029028">
    <property type="entry name" value="Alpha/beta_knot_MTases"/>
</dbReference>
<dbReference type="InterPro" id="IPR003742">
    <property type="entry name" value="RlmH-like"/>
</dbReference>
<dbReference type="InterPro" id="IPR029026">
    <property type="entry name" value="tRNA_m1G_MTases_N"/>
</dbReference>
<dbReference type="PANTHER" id="PTHR33603">
    <property type="entry name" value="METHYLTRANSFERASE"/>
    <property type="match status" value="1"/>
</dbReference>
<dbReference type="PANTHER" id="PTHR33603:SF1">
    <property type="entry name" value="RIBOSOMAL RNA LARGE SUBUNIT METHYLTRANSFERASE H"/>
    <property type="match status" value="1"/>
</dbReference>
<dbReference type="Pfam" id="PF02590">
    <property type="entry name" value="SPOUT_MTase"/>
    <property type="match status" value="1"/>
</dbReference>
<dbReference type="PIRSF" id="PIRSF004505">
    <property type="entry name" value="MT_bac"/>
    <property type="match status" value="1"/>
</dbReference>
<dbReference type="SUPFAM" id="SSF75217">
    <property type="entry name" value="alpha/beta knot"/>
    <property type="match status" value="1"/>
</dbReference>
<protein>
    <recommendedName>
        <fullName evidence="1">Ribosomal RNA large subunit methyltransferase H</fullName>
        <ecNumber evidence="1">2.1.1.177</ecNumber>
    </recommendedName>
    <alternativeName>
        <fullName evidence="1">23S rRNA (pseudouridine1915-N3)-methyltransferase</fullName>
    </alternativeName>
    <alternativeName>
        <fullName evidence="1">23S rRNA m3Psi1915 methyltransferase</fullName>
    </alternativeName>
    <alternativeName>
        <fullName evidence="1">rRNA (pseudouridine-N3-)-methyltransferase RlmH</fullName>
    </alternativeName>
</protein>